<comment type="function">
    <text evidence="1">Located at the top of the head of the 30S subunit, it contacts several helices of the 16S rRNA. In the 70S ribosome it contacts the 23S rRNA (bridge B1a) and protein L5 of the 50S subunit (bridge B1b), connecting the 2 subunits; these bridges are implicated in subunit movement. Contacts the tRNAs in the A and P-sites.</text>
</comment>
<comment type="subunit">
    <text evidence="1">Part of the 30S ribosomal subunit. Forms a loose heterodimer with protein S19. Forms two bridges to the 50S subunit in the 70S ribosome.</text>
</comment>
<comment type="similarity">
    <text evidence="1">Belongs to the universal ribosomal protein uS13 family.</text>
</comment>
<keyword id="KW-1185">Reference proteome</keyword>
<keyword id="KW-0687">Ribonucleoprotein</keyword>
<keyword id="KW-0689">Ribosomal protein</keyword>
<keyword id="KW-0694">RNA-binding</keyword>
<keyword id="KW-0699">rRNA-binding</keyword>
<keyword id="KW-0820">tRNA-binding</keyword>
<name>RS13_BURM1</name>
<evidence type="ECO:0000255" key="1">
    <source>
        <dbReference type="HAMAP-Rule" id="MF_01315"/>
    </source>
</evidence>
<evidence type="ECO:0000256" key="2">
    <source>
        <dbReference type="SAM" id="MobiDB-lite"/>
    </source>
</evidence>
<evidence type="ECO:0000305" key="3"/>
<dbReference type="EMBL" id="CP000868">
    <property type="protein sequence ID" value="ABX13967.1"/>
    <property type="molecule type" value="Genomic_DNA"/>
</dbReference>
<dbReference type="EMBL" id="AP009385">
    <property type="protein sequence ID" value="BAG44867.1"/>
    <property type="molecule type" value="Genomic_DNA"/>
</dbReference>
<dbReference type="RefSeq" id="WP_006400641.1">
    <property type="nucleotide sequence ID" value="NC_010804.1"/>
</dbReference>
<dbReference type="SMR" id="A9ADL6"/>
<dbReference type="STRING" id="395019.BMULJ_02982"/>
<dbReference type="GeneID" id="93170994"/>
<dbReference type="KEGG" id="bmj:BMULJ_02982"/>
<dbReference type="KEGG" id="bmu:Bmul_0272"/>
<dbReference type="eggNOG" id="COG0099">
    <property type="taxonomic scope" value="Bacteria"/>
</dbReference>
<dbReference type="HOGENOM" id="CLU_103849_1_2_4"/>
<dbReference type="Proteomes" id="UP000008815">
    <property type="component" value="Chromosome 1"/>
</dbReference>
<dbReference type="GO" id="GO:0005829">
    <property type="term" value="C:cytosol"/>
    <property type="evidence" value="ECO:0007669"/>
    <property type="project" value="TreeGrafter"/>
</dbReference>
<dbReference type="GO" id="GO:0015935">
    <property type="term" value="C:small ribosomal subunit"/>
    <property type="evidence" value="ECO:0007669"/>
    <property type="project" value="TreeGrafter"/>
</dbReference>
<dbReference type="GO" id="GO:0019843">
    <property type="term" value="F:rRNA binding"/>
    <property type="evidence" value="ECO:0007669"/>
    <property type="project" value="UniProtKB-UniRule"/>
</dbReference>
<dbReference type="GO" id="GO:0003735">
    <property type="term" value="F:structural constituent of ribosome"/>
    <property type="evidence" value="ECO:0007669"/>
    <property type="project" value="InterPro"/>
</dbReference>
<dbReference type="GO" id="GO:0000049">
    <property type="term" value="F:tRNA binding"/>
    <property type="evidence" value="ECO:0007669"/>
    <property type="project" value="UniProtKB-UniRule"/>
</dbReference>
<dbReference type="GO" id="GO:0006412">
    <property type="term" value="P:translation"/>
    <property type="evidence" value="ECO:0007669"/>
    <property type="project" value="UniProtKB-UniRule"/>
</dbReference>
<dbReference type="FunFam" id="1.10.8.50:FF:000001">
    <property type="entry name" value="30S ribosomal protein S13"/>
    <property type="match status" value="1"/>
</dbReference>
<dbReference type="FunFam" id="4.10.910.10:FF:000001">
    <property type="entry name" value="30S ribosomal protein S13"/>
    <property type="match status" value="1"/>
</dbReference>
<dbReference type="Gene3D" id="1.10.8.50">
    <property type="match status" value="1"/>
</dbReference>
<dbReference type="Gene3D" id="4.10.910.10">
    <property type="entry name" value="30s ribosomal protein s13, domain 2"/>
    <property type="match status" value="1"/>
</dbReference>
<dbReference type="HAMAP" id="MF_01315">
    <property type="entry name" value="Ribosomal_uS13"/>
    <property type="match status" value="1"/>
</dbReference>
<dbReference type="InterPro" id="IPR027437">
    <property type="entry name" value="Rbsml_uS13_C"/>
</dbReference>
<dbReference type="InterPro" id="IPR001892">
    <property type="entry name" value="Ribosomal_uS13"/>
</dbReference>
<dbReference type="InterPro" id="IPR010979">
    <property type="entry name" value="Ribosomal_uS13-like_H2TH"/>
</dbReference>
<dbReference type="InterPro" id="IPR019980">
    <property type="entry name" value="Ribosomal_uS13_bac-type"/>
</dbReference>
<dbReference type="InterPro" id="IPR018269">
    <property type="entry name" value="Ribosomal_uS13_CS"/>
</dbReference>
<dbReference type="NCBIfam" id="TIGR03631">
    <property type="entry name" value="uS13_bact"/>
    <property type="match status" value="1"/>
</dbReference>
<dbReference type="PANTHER" id="PTHR10871">
    <property type="entry name" value="30S RIBOSOMAL PROTEIN S13/40S RIBOSOMAL PROTEIN S18"/>
    <property type="match status" value="1"/>
</dbReference>
<dbReference type="PANTHER" id="PTHR10871:SF1">
    <property type="entry name" value="SMALL RIBOSOMAL SUBUNIT PROTEIN US13M"/>
    <property type="match status" value="1"/>
</dbReference>
<dbReference type="Pfam" id="PF00416">
    <property type="entry name" value="Ribosomal_S13"/>
    <property type="match status" value="1"/>
</dbReference>
<dbReference type="PIRSF" id="PIRSF002134">
    <property type="entry name" value="Ribosomal_S13"/>
    <property type="match status" value="1"/>
</dbReference>
<dbReference type="SUPFAM" id="SSF46946">
    <property type="entry name" value="S13-like H2TH domain"/>
    <property type="match status" value="1"/>
</dbReference>
<dbReference type="PROSITE" id="PS00646">
    <property type="entry name" value="RIBOSOMAL_S13_1"/>
    <property type="match status" value="1"/>
</dbReference>
<dbReference type="PROSITE" id="PS50159">
    <property type="entry name" value="RIBOSOMAL_S13_2"/>
    <property type="match status" value="1"/>
</dbReference>
<accession>A9ADL6</accession>
<gene>
    <name evidence="1" type="primary">rpsM</name>
    <name type="ordered locus">Bmul_0272</name>
    <name type="ordered locus">BMULJ_02982</name>
</gene>
<sequence>MARIAGVNIPNHQHTEIGLTAIFGIGRTRSRSICVAAGVDFSKKVKDLTDADLEKLREEVGKFVVEGDLRREVTMNIKRLMDLGCYRGVRHRKGLPMRGQRTRTNARTRKGPRRAAQALKK</sequence>
<protein>
    <recommendedName>
        <fullName evidence="1">Small ribosomal subunit protein uS13</fullName>
    </recommendedName>
    <alternativeName>
        <fullName evidence="3">30S ribosomal protein S13</fullName>
    </alternativeName>
</protein>
<organism>
    <name type="scientific">Burkholderia multivorans (strain ATCC 17616 / 249)</name>
    <dbReference type="NCBI Taxonomy" id="395019"/>
    <lineage>
        <taxon>Bacteria</taxon>
        <taxon>Pseudomonadati</taxon>
        <taxon>Pseudomonadota</taxon>
        <taxon>Betaproteobacteria</taxon>
        <taxon>Burkholderiales</taxon>
        <taxon>Burkholderiaceae</taxon>
        <taxon>Burkholderia</taxon>
        <taxon>Burkholderia cepacia complex</taxon>
    </lineage>
</organism>
<proteinExistence type="inferred from homology"/>
<reference key="1">
    <citation type="submission" date="2007-10" db="EMBL/GenBank/DDBJ databases">
        <title>Complete sequence of chromosome 1 of Burkholderia multivorans ATCC 17616.</title>
        <authorList>
            <person name="Copeland A."/>
            <person name="Lucas S."/>
            <person name="Lapidus A."/>
            <person name="Barry K."/>
            <person name="Glavina del Rio T."/>
            <person name="Dalin E."/>
            <person name="Tice H."/>
            <person name="Pitluck S."/>
            <person name="Chain P."/>
            <person name="Malfatti S."/>
            <person name="Shin M."/>
            <person name="Vergez L."/>
            <person name="Schmutz J."/>
            <person name="Larimer F."/>
            <person name="Land M."/>
            <person name="Hauser L."/>
            <person name="Kyrpides N."/>
            <person name="Kim E."/>
            <person name="Tiedje J."/>
            <person name="Richardson P."/>
        </authorList>
    </citation>
    <scope>NUCLEOTIDE SEQUENCE [LARGE SCALE GENOMIC DNA]</scope>
    <source>
        <strain>ATCC 17616 / 249</strain>
    </source>
</reference>
<reference key="2">
    <citation type="submission" date="2007-04" db="EMBL/GenBank/DDBJ databases">
        <title>Complete genome sequence of Burkholderia multivorans ATCC 17616.</title>
        <authorList>
            <person name="Ohtsubo Y."/>
            <person name="Yamashita A."/>
            <person name="Kurokawa K."/>
            <person name="Takami H."/>
            <person name="Yuhara S."/>
            <person name="Nishiyama E."/>
            <person name="Endo R."/>
            <person name="Miyazaki R."/>
            <person name="Ono A."/>
            <person name="Yano K."/>
            <person name="Ito M."/>
            <person name="Sota M."/>
            <person name="Yuji N."/>
            <person name="Hattori M."/>
            <person name="Tsuda M."/>
        </authorList>
    </citation>
    <scope>NUCLEOTIDE SEQUENCE [LARGE SCALE GENOMIC DNA]</scope>
    <source>
        <strain>ATCC 17616 / 249</strain>
    </source>
</reference>
<feature type="chain" id="PRO_1000141232" description="Small ribosomal subunit protein uS13">
    <location>
        <begin position="1"/>
        <end position="121"/>
    </location>
</feature>
<feature type="region of interest" description="Disordered" evidence="2">
    <location>
        <begin position="92"/>
        <end position="121"/>
    </location>
</feature>